<reference key="1">
    <citation type="submission" date="2009-07" db="EMBL/GenBank/DDBJ databases">
        <title>Complete sequence of Pectobacterium carotovorum subsp. carotovorum PC1.</title>
        <authorList>
            <consortium name="US DOE Joint Genome Institute"/>
            <person name="Lucas S."/>
            <person name="Copeland A."/>
            <person name="Lapidus A."/>
            <person name="Glavina del Rio T."/>
            <person name="Tice H."/>
            <person name="Bruce D."/>
            <person name="Goodwin L."/>
            <person name="Pitluck S."/>
            <person name="Munk A.C."/>
            <person name="Brettin T."/>
            <person name="Detter J.C."/>
            <person name="Han C."/>
            <person name="Tapia R."/>
            <person name="Larimer F."/>
            <person name="Land M."/>
            <person name="Hauser L."/>
            <person name="Kyrpides N."/>
            <person name="Mikhailova N."/>
            <person name="Balakrishnan V."/>
            <person name="Glasner J."/>
            <person name="Perna N.T."/>
        </authorList>
    </citation>
    <scope>NUCLEOTIDE SEQUENCE [LARGE SCALE GENOMIC DNA]</scope>
    <source>
        <strain>PC1</strain>
    </source>
</reference>
<name>Y1998_PECCP</name>
<gene>
    <name type="ordered locus">PC1_1998</name>
</gene>
<dbReference type="EMBL" id="CP001657">
    <property type="protein sequence ID" value="ACT13039.1"/>
    <property type="molecule type" value="Genomic_DNA"/>
</dbReference>
<dbReference type="RefSeq" id="WP_015840232.1">
    <property type="nucleotide sequence ID" value="NC_012917.1"/>
</dbReference>
<dbReference type="STRING" id="561230.PC1_1998"/>
<dbReference type="KEGG" id="pct:PC1_1998"/>
<dbReference type="eggNOG" id="ENOG502Z96Y">
    <property type="taxonomic scope" value="Bacteria"/>
</dbReference>
<dbReference type="HOGENOM" id="CLU_073287_0_0_6"/>
<dbReference type="OrthoDB" id="6454524at2"/>
<dbReference type="Proteomes" id="UP000002736">
    <property type="component" value="Chromosome"/>
</dbReference>
<dbReference type="GO" id="GO:0005886">
    <property type="term" value="C:plasma membrane"/>
    <property type="evidence" value="ECO:0007669"/>
    <property type="project" value="UniProtKB-SubCell"/>
</dbReference>
<dbReference type="HAMAP" id="MF_01067">
    <property type="entry name" value="UPF0259"/>
    <property type="match status" value="1"/>
</dbReference>
<dbReference type="InterPro" id="IPR009627">
    <property type="entry name" value="UPF0259"/>
</dbReference>
<dbReference type="NCBIfam" id="NF002774">
    <property type="entry name" value="PRK02868.1"/>
    <property type="match status" value="1"/>
</dbReference>
<dbReference type="Pfam" id="PF06790">
    <property type="entry name" value="UPF0259"/>
    <property type="match status" value="1"/>
</dbReference>
<sequence>MPITANTLYRDTMNFTRNQFISILMMSLLTAFITVILNHALSPSVDELRILSSSGSDLSSSVESGLMDLIQQMTPEQQTVLLKMSAAGTFAALVGNVLLTGGVLMLIQLVSDGHRTSALRAIGASTPFLLRLLFLILLCTLLIQLGMMLLVIPGVLLAIALSLSPVIVVTEKSGIFSAIKASTKLAYGNLRATAPAIVMWLLAKIAILLVVSKLPISSPTVLGVVLNGLSNLISAILLIYLFRLYMLLRA</sequence>
<protein>
    <recommendedName>
        <fullName evidence="1">UPF0259 membrane protein PC1_1998</fullName>
    </recommendedName>
</protein>
<keyword id="KW-0997">Cell inner membrane</keyword>
<keyword id="KW-1003">Cell membrane</keyword>
<keyword id="KW-0472">Membrane</keyword>
<keyword id="KW-0812">Transmembrane</keyword>
<keyword id="KW-1133">Transmembrane helix</keyword>
<organism>
    <name type="scientific">Pectobacterium carotovorum subsp. carotovorum (strain PC1)</name>
    <dbReference type="NCBI Taxonomy" id="561230"/>
    <lineage>
        <taxon>Bacteria</taxon>
        <taxon>Pseudomonadati</taxon>
        <taxon>Pseudomonadota</taxon>
        <taxon>Gammaproteobacteria</taxon>
        <taxon>Enterobacterales</taxon>
        <taxon>Pectobacteriaceae</taxon>
        <taxon>Pectobacterium</taxon>
    </lineage>
</organism>
<feature type="chain" id="PRO_1000213467" description="UPF0259 membrane protein PC1_1998">
    <location>
        <begin position="1"/>
        <end position="250"/>
    </location>
</feature>
<feature type="transmembrane region" description="Helical" evidence="1">
    <location>
        <begin position="20"/>
        <end position="40"/>
    </location>
</feature>
<feature type="transmembrane region" description="Helical" evidence="1">
    <location>
        <begin position="90"/>
        <end position="110"/>
    </location>
</feature>
<feature type="transmembrane region" description="Helical" evidence="1">
    <location>
        <begin position="132"/>
        <end position="152"/>
    </location>
</feature>
<feature type="transmembrane region" description="Helical" evidence="1">
    <location>
        <begin position="156"/>
        <end position="176"/>
    </location>
</feature>
<feature type="transmembrane region" description="Helical" evidence="1">
    <location>
        <begin position="192"/>
        <end position="212"/>
    </location>
</feature>
<feature type="transmembrane region" description="Helical" evidence="1">
    <location>
        <begin position="222"/>
        <end position="242"/>
    </location>
</feature>
<evidence type="ECO:0000255" key="1">
    <source>
        <dbReference type="HAMAP-Rule" id="MF_01067"/>
    </source>
</evidence>
<accession>C6DGZ0</accession>
<comment type="subcellular location">
    <subcellularLocation>
        <location evidence="1">Cell inner membrane</location>
        <topology evidence="1">Multi-pass membrane protein</topology>
    </subcellularLocation>
</comment>
<comment type="similarity">
    <text evidence="1">Belongs to the UPF0259 family.</text>
</comment>
<proteinExistence type="inferred from homology"/>